<reference key="1">
    <citation type="submission" date="2004-11" db="EMBL/GenBank/DDBJ databases">
        <authorList>
            <consortium name="The German cDNA consortium"/>
        </authorList>
    </citation>
    <scope>NUCLEOTIDE SEQUENCE [LARGE SCALE MRNA]</scope>
    <source>
        <tissue>Brain cortex</tissue>
    </source>
</reference>
<accession>Q5R7W3</accession>
<keyword id="KW-0007">Acetylation</keyword>
<keyword id="KW-0175">Coiled coil</keyword>
<keyword id="KW-0539">Nucleus</keyword>
<keyword id="KW-0597">Phosphoprotein</keyword>
<keyword id="KW-1185">Reference proteome</keyword>
<proteinExistence type="evidence at transcript level"/>
<organism>
    <name type="scientific">Pongo abelii</name>
    <name type="common">Sumatran orangutan</name>
    <name type="synonym">Pongo pygmaeus abelii</name>
    <dbReference type="NCBI Taxonomy" id="9601"/>
    <lineage>
        <taxon>Eukaryota</taxon>
        <taxon>Metazoa</taxon>
        <taxon>Chordata</taxon>
        <taxon>Craniata</taxon>
        <taxon>Vertebrata</taxon>
        <taxon>Euteleostomi</taxon>
        <taxon>Mammalia</taxon>
        <taxon>Eutheria</taxon>
        <taxon>Euarchontoglires</taxon>
        <taxon>Primates</taxon>
        <taxon>Haplorrhini</taxon>
        <taxon>Catarrhini</taxon>
        <taxon>Hominidae</taxon>
        <taxon>Pongo</taxon>
    </lineage>
</organism>
<name>CWC27_PONAB</name>
<dbReference type="EMBL" id="CR859996">
    <property type="protein sequence ID" value="CAH92147.1"/>
    <property type="molecule type" value="mRNA"/>
</dbReference>
<dbReference type="RefSeq" id="NP_001126256.1">
    <property type="nucleotide sequence ID" value="NM_001132784.1"/>
</dbReference>
<dbReference type="SMR" id="Q5R7W3"/>
<dbReference type="FunCoup" id="Q5R7W3">
    <property type="interactions" value="1811"/>
</dbReference>
<dbReference type="STRING" id="9601.ENSPPYP00000017324"/>
<dbReference type="GeneID" id="100173228"/>
<dbReference type="KEGG" id="pon:100173228"/>
<dbReference type="CTD" id="10283"/>
<dbReference type="eggNOG" id="KOG0415">
    <property type="taxonomic scope" value="Eukaryota"/>
</dbReference>
<dbReference type="eggNOG" id="KOG0885">
    <property type="taxonomic scope" value="Eukaryota"/>
</dbReference>
<dbReference type="InParanoid" id="Q5R7W3"/>
<dbReference type="OrthoDB" id="442970at2759"/>
<dbReference type="Proteomes" id="UP000001595">
    <property type="component" value="Unplaced"/>
</dbReference>
<dbReference type="GO" id="GO:0071013">
    <property type="term" value="C:catalytic step 2 spliceosome"/>
    <property type="evidence" value="ECO:0007669"/>
    <property type="project" value="TreeGrafter"/>
</dbReference>
<dbReference type="GO" id="GO:0071005">
    <property type="term" value="C:U2-type precatalytic spliceosome"/>
    <property type="evidence" value="ECO:0000250"/>
    <property type="project" value="UniProtKB"/>
</dbReference>
<dbReference type="GO" id="GO:0003755">
    <property type="term" value="F:peptidyl-prolyl cis-trans isomerase activity"/>
    <property type="evidence" value="ECO:0007669"/>
    <property type="project" value="InterPro"/>
</dbReference>
<dbReference type="GO" id="GO:0006457">
    <property type="term" value="P:protein folding"/>
    <property type="evidence" value="ECO:0007669"/>
    <property type="project" value="InterPro"/>
</dbReference>
<dbReference type="CDD" id="cd22288">
    <property type="entry name" value="CWC27_CTD"/>
    <property type="match status" value="1"/>
</dbReference>
<dbReference type="CDD" id="cd01925">
    <property type="entry name" value="cyclophilin_CeCYP16-like"/>
    <property type="match status" value="1"/>
</dbReference>
<dbReference type="FunFam" id="2.40.100.10:FF:000007">
    <property type="entry name" value="Peptidyl-prolyl cis-trans isomerase CWC27 homolog"/>
    <property type="match status" value="1"/>
</dbReference>
<dbReference type="Gene3D" id="2.40.100.10">
    <property type="entry name" value="Cyclophilin-like"/>
    <property type="match status" value="1"/>
</dbReference>
<dbReference type="InterPro" id="IPR029000">
    <property type="entry name" value="Cyclophilin-like_dom_sf"/>
</dbReference>
<dbReference type="InterPro" id="IPR020892">
    <property type="entry name" value="Cyclophilin-type_PPIase_CS"/>
</dbReference>
<dbReference type="InterPro" id="IPR002130">
    <property type="entry name" value="Cyclophilin-type_PPIase_dom"/>
</dbReference>
<dbReference type="InterPro" id="IPR044666">
    <property type="entry name" value="Cyclophilin_A-like"/>
</dbReference>
<dbReference type="PANTHER" id="PTHR45625">
    <property type="entry name" value="PEPTIDYL-PROLYL CIS-TRANS ISOMERASE-RELATED"/>
    <property type="match status" value="1"/>
</dbReference>
<dbReference type="PANTHER" id="PTHR45625:SF6">
    <property type="entry name" value="SPLICEOSOME-ASSOCIATED PROTEIN CWC27 HOMOLOG"/>
    <property type="match status" value="1"/>
</dbReference>
<dbReference type="Pfam" id="PF00160">
    <property type="entry name" value="Pro_isomerase"/>
    <property type="match status" value="1"/>
</dbReference>
<dbReference type="PRINTS" id="PR00153">
    <property type="entry name" value="CSAPPISMRASE"/>
</dbReference>
<dbReference type="SUPFAM" id="SSF50891">
    <property type="entry name" value="Cyclophilin-like"/>
    <property type="match status" value="1"/>
</dbReference>
<dbReference type="PROSITE" id="PS00170">
    <property type="entry name" value="CSA_PPIASE_1"/>
    <property type="match status" value="1"/>
</dbReference>
<dbReference type="PROSITE" id="PS50072">
    <property type="entry name" value="CSA_PPIASE_2"/>
    <property type="match status" value="1"/>
</dbReference>
<comment type="function">
    <text evidence="2">As part of the spliceosome, plays a role in pre-mRNA splicing. Probable inactive PPIase with no peptidyl-prolyl cis-trans isomerase activity. As a component of the minor spliceosome, involved in the splicing of U12-type introns in pre-mRNAs (By similarity).</text>
</comment>
<comment type="subunit">
    <text evidence="2">Part of the activated spliceosome B/catalytic step 1 spliceosome, one of the forms of the spliceosome which has a well-formed active site but still cannot catalyze the branching reaction and is composed at least of 52 proteins, the U2, U5 and U6 snRNAs and the pre-mRNA. Recruited during early steps of activated spliceosome B maturation, it is probably one of the first proteins released from this complex as he matures to the spliceosome C complex. Component of the minor spliceosome, which splices U12-type introns (By similarity).</text>
</comment>
<comment type="subcellular location">
    <subcellularLocation>
        <location evidence="2">Nucleus</location>
    </subcellularLocation>
</comment>
<comment type="similarity">
    <text evidence="6">Belongs to the cyclophilin-type PPIase family.</text>
</comment>
<comment type="caution">
    <text evidence="2">Despite the fact that it belongs to the cyclophilin-type PPIase family, it has probably no peptidyl-prolyl cis-trans isomerase activity.</text>
</comment>
<evidence type="ECO:0000250" key="1">
    <source>
        <dbReference type="UniProtKB" id="Q5XIB2"/>
    </source>
</evidence>
<evidence type="ECO:0000250" key="2">
    <source>
        <dbReference type="UniProtKB" id="Q6UX04"/>
    </source>
</evidence>
<evidence type="ECO:0000255" key="3"/>
<evidence type="ECO:0000255" key="4">
    <source>
        <dbReference type="PROSITE-ProRule" id="PRU00156"/>
    </source>
</evidence>
<evidence type="ECO:0000256" key="5">
    <source>
        <dbReference type="SAM" id="MobiDB-lite"/>
    </source>
</evidence>
<evidence type="ECO:0000305" key="6"/>
<feature type="initiator methionine" description="Removed" evidence="2">
    <location>
        <position position="1"/>
    </location>
</feature>
<feature type="chain" id="PRO_0000313650" description="Spliceosome-associated protein CWC27 homolog">
    <location>
        <begin position="2"/>
        <end position="473"/>
    </location>
</feature>
<feature type="domain" description="PPIase cyclophilin-type" evidence="4">
    <location>
        <begin position="11"/>
        <end position="166"/>
    </location>
</feature>
<feature type="region of interest" description="Disordered" evidence="5">
    <location>
        <begin position="177"/>
        <end position="386"/>
    </location>
</feature>
<feature type="region of interest" description="Disordered" evidence="5">
    <location>
        <begin position="399"/>
        <end position="473"/>
    </location>
</feature>
<feature type="coiled-coil region" evidence="3">
    <location>
        <begin position="206"/>
        <end position="230"/>
    </location>
</feature>
<feature type="coiled-coil region" evidence="3">
    <location>
        <begin position="305"/>
        <end position="378"/>
    </location>
</feature>
<feature type="compositionally biased region" description="Basic and acidic residues" evidence="5">
    <location>
        <begin position="177"/>
        <end position="193"/>
    </location>
</feature>
<feature type="compositionally biased region" description="Basic and acidic residues" evidence="5">
    <location>
        <begin position="231"/>
        <end position="241"/>
    </location>
</feature>
<feature type="compositionally biased region" description="Acidic residues" evidence="5">
    <location>
        <begin position="257"/>
        <end position="266"/>
    </location>
</feature>
<feature type="compositionally biased region" description="Basic and acidic residues" evidence="5">
    <location>
        <begin position="267"/>
        <end position="287"/>
    </location>
</feature>
<feature type="compositionally biased region" description="Basic and acidic residues" evidence="5">
    <location>
        <begin position="305"/>
        <end position="348"/>
    </location>
</feature>
<feature type="compositionally biased region" description="Basic and acidic residues" evidence="5">
    <location>
        <begin position="360"/>
        <end position="372"/>
    </location>
</feature>
<feature type="compositionally biased region" description="Acidic residues" evidence="5">
    <location>
        <begin position="405"/>
        <end position="419"/>
    </location>
</feature>
<feature type="compositionally biased region" description="Basic and acidic residues" evidence="5">
    <location>
        <begin position="426"/>
        <end position="438"/>
    </location>
</feature>
<feature type="compositionally biased region" description="Basic and acidic residues" evidence="5">
    <location>
        <begin position="458"/>
        <end position="473"/>
    </location>
</feature>
<feature type="modified residue" description="N-acetylserine" evidence="2">
    <location>
        <position position="2"/>
    </location>
</feature>
<feature type="modified residue" description="Phosphoserine" evidence="1">
    <location>
        <position position="347"/>
    </location>
</feature>
<sequence length="473" mass="53806">MSNIYIQEPPTNGKVLLKTTAGDIDIELWSKEAPKACRNFIQLCLEAYYDNTIFHRVVPGFIVQGGDPTGTGSGGESIYGAPFKDEFHSRLRFNRRGLVAMANAGSHDNGSQFFFTLGRADELNNKHTIFGKVTGDTVYNMLRLSEVDIDDEERPHNPHKIKSCEVLFNPFDDIIPREIKRPKKEKPEEEVKKLKPKGTKNFSLLSFGEEAEEEEEEVNRVSQSMKGKSKSSHDLLKDDPHLSSVPVVESEKGDAAGDLDDGGEGESAEHDEYIDGDEKNLMRERIAKKLKKDTSANVKSTGEGEVEKKSVNRSEELRKEARQLKRELLAAKQKKVENAAKPAEKRSEEEEATPDGAVAEYRREKQKYEALRKQQSKKGTSREDQTLALLNQFKSKLTQAIAETPENDIPETEVEDDEGWMSHVLQFEDKSRKVKDASMQDSDTFEIYDPRNPVNKRRREESKKLMREKKERR</sequence>
<gene>
    <name evidence="2" type="primary">CWC27</name>
    <name type="synonym">SDCCAG10</name>
</gene>
<protein>
    <recommendedName>
        <fullName evidence="6">Spliceosome-associated protein CWC27 homolog</fullName>
    </recommendedName>
    <alternativeName>
        <fullName evidence="2">Probable inactive peptidyl-prolyl cis-trans isomerase CWC27 homolog</fullName>
        <shortName evidence="2">PPIase CWC27</shortName>
    </alternativeName>
</protein>